<keyword id="KW-0001">2Fe-2S</keyword>
<keyword id="KW-0238">DNA-binding</keyword>
<keyword id="KW-0408">Iron</keyword>
<keyword id="KW-0411">Iron-sulfur</keyword>
<keyword id="KW-0479">Metal-binding</keyword>
<keyword id="KW-0678">Repressor</keyword>
<keyword id="KW-0804">Transcription</keyword>
<keyword id="KW-0805">Transcription regulation</keyword>
<feature type="chain" id="PRO_0000268941" description="HTH-type transcriptional repressor NsrR">
    <location>
        <begin position="1"/>
        <end position="141"/>
    </location>
</feature>
<feature type="domain" description="HTH rrf2-type" evidence="1">
    <location>
        <begin position="2"/>
        <end position="129"/>
    </location>
</feature>
<feature type="DNA-binding region" description="H-T-H motif" evidence="1">
    <location>
        <begin position="28"/>
        <end position="51"/>
    </location>
</feature>
<feature type="binding site" evidence="1">
    <location>
        <position position="91"/>
    </location>
    <ligand>
        <name>[2Fe-2S] cluster</name>
        <dbReference type="ChEBI" id="CHEBI:190135"/>
    </ligand>
</feature>
<feature type="binding site" evidence="1">
    <location>
        <position position="96"/>
    </location>
    <ligand>
        <name>[2Fe-2S] cluster</name>
        <dbReference type="ChEBI" id="CHEBI:190135"/>
    </ligand>
</feature>
<feature type="binding site" evidence="1">
    <location>
        <position position="102"/>
    </location>
    <ligand>
        <name>[2Fe-2S] cluster</name>
        <dbReference type="ChEBI" id="CHEBI:190135"/>
    </ligand>
</feature>
<comment type="function">
    <text evidence="1">Nitric oxide-sensitive repressor of genes involved in protecting the cell against nitrosative stress. May require iron for activity.</text>
</comment>
<comment type="cofactor">
    <cofactor evidence="1">
        <name>[2Fe-2S] cluster</name>
        <dbReference type="ChEBI" id="CHEBI:190135"/>
    </cofactor>
    <text evidence="1">Binds 1 [2Fe-2S] cluster per subunit.</text>
</comment>
<name>NSRR_ECOL5</name>
<evidence type="ECO:0000255" key="1">
    <source>
        <dbReference type="HAMAP-Rule" id="MF_01177"/>
    </source>
</evidence>
<reference key="1">
    <citation type="journal article" date="2006" name="Mol. Microbiol.">
        <title>Role of pathogenicity island-associated integrases in the genome plasticity of uropathogenic Escherichia coli strain 536.</title>
        <authorList>
            <person name="Hochhut B."/>
            <person name="Wilde C."/>
            <person name="Balling G."/>
            <person name="Middendorf B."/>
            <person name="Dobrindt U."/>
            <person name="Brzuszkiewicz E."/>
            <person name="Gottschalk G."/>
            <person name="Carniel E."/>
            <person name="Hacker J."/>
        </authorList>
    </citation>
    <scope>NUCLEOTIDE SEQUENCE [LARGE SCALE GENOMIC DNA]</scope>
    <source>
        <strain>536 / UPEC</strain>
    </source>
</reference>
<organism>
    <name type="scientific">Escherichia coli O6:K15:H31 (strain 536 / UPEC)</name>
    <dbReference type="NCBI Taxonomy" id="362663"/>
    <lineage>
        <taxon>Bacteria</taxon>
        <taxon>Pseudomonadati</taxon>
        <taxon>Pseudomonadota</taxon>
        <taxon>Gammaproteobacteria</taxon>
        <taxon>Enterobacterales</taxon>
        <taxon>Enterobacteriaceae</taxon>
        <taxon>Escherichia</taxon>
    </lineage>
</organism>
<gene>
    <name evidence="1" type="primary">nsrR</name>
    <name type="ordered locus">ECP_4423</name>
</gene>
<protein>
    <recommendedName>
        <fullName evidence="1">HTH-type transcriptional repressor NsrR</fullName>
    </recommendedName>
</protein>
<proteinExistence type="inferred from homology"/>
<sequence>MQLTSFTDYGLRALIYMASLPEGRMTSISEVTDVYGVSRNHMVKIINQLSRAGYVTAVRGKNGGIRLGKPASAIRIGDVVRELEPLSLVNCSSEFCHITPACRLKQALSKAVQSFLTELDNYTLADLVEENQPLYKLLLVE</sequence>
<dbReference type="EMBL" id="CP000247">
    <property type="protein sequence ID" value="ABG72364.1"/>
    <property type="molecule type" value="Genomic_DNA"/>
</dbReference>
<dbReference type="RefSeq" id="WP_001177639.1">
    <property type="nucleotide sequence ID" value="NC_008253.1"/>
</dbReference>
<dbReference type="SMR" id="Q0T9L5"/>
<dbReference type="GeneID" id="93777643"/>
<dbReference type="KEGG" id="ecp:ECP_4423"/>
<dbReference type="HOGENOM" id="CLU_107144_2_1_6"/>
<dbReference type="Proteomes" id="UP000009182">
    <property type="component" value="Chromosome"/>
</dbReference>
<dbReference type="GO" id="GO:0005829">
    <property type="term" value="C:cytosol"/>
    <property type="evidence" value="ECO:0007669"/>
    <property type="project" value="TreeGrafter"/>
</dbReference>
<dbReference type="GO" id="GO:0051537">
    <property type="term" value="F:2 iron, 2 sulfur cluster binding"/>
    <property type="evidence" value="ECO:0007669"/>
    <property type="project" value="UniProtKB-KW"/>
</dbReference>
<dbReference type="GO" id="GO:0003700">
    <property type="term" value="F:DNA-binding transcription factor activity"/>
    <property type="evidence" value="ECO:0007669"/>
    <property type="project" value="UniProtKB-UniRule"/>
</dbReference>
<dbReference type="GO" id="GO:0003690">
    <property type="term" value="F:double-stranded DNA binding"/>
    <property type="evidence" value="ECO:0007669"/>
    <property type="project" value="UniProtKB-UniRule"/>
</dbReference>
<dbReference type="GO" id="GO:0005506">
    <property type="term" value="F:iron ion binding"/>
    <property type="evidence" value="ECO:0007669"/>
    <property type="project" value="UniProtKB-UniRule"/>
</dbReference>
<dbReference type="GO" id="GO:0045892">
    <property type="term" value="P:negative regulation of DNA-templated transcription"/>
    <property type="evidence" value="ECO:0007669"/>
    <property type="project" value="InterPro"/>
</dbReference>
<dbReference type="FunFam" id="1.10.10.10:FF:000105">
    <property type="entry name" value="HTH-type transcriptional repressor NsrR"/>
    <property type="match status" value="1"/>
</dbReference>
<dbReference type="Gene3D" id="1.10.10.10">
    <property type="entry name" value="Winged helix-like DNA-binding domain superfamily/Winged helix DNA-binding domain"/>
    <property type="match status" value="1"/>
</dbReference>
<dbReference type="HAMAP" id="MF_01177">
    <property type="entry name" value="HTH_type_NsrR"/>
    <property type="match status" value="1"/>
</dbReference>
<dbReference type="InterPro" id="IPR030489">
    <property type="entry name" value="TR_Rrf2-type_CS"/>
</dbReference>
<dbReference type="InterPro" id="IPR000944">
    <property type="entry name" value="Tscrpt_reg_Rrf2"/>
</dbReference>
<dbReference type="InterPro" id="IPR023761">
    <property type="entry name" value="Tscrpt_rep_HTH_NsrR"/>
</dbReference>
<dbReference type="InterPro" id="IPR036388">
    <property type="entry name" value="WH-like_DNA-bd_sf"/>
</dbReference>
<dbReference type="InterPro" id="IPR036390">
    <property type="entry name" value="WH_DNA-bd_sf"/>
</dbReference>
<dbReference type="NCBIfam" id="NF008240">
    <property type="entry name" value="PRK11014.1"/>
    <property type="match status" value="1"/>
</dbReference>
<dbReference type="NCBIfam" id="TIGR00738">
    <property type="entry name" value="rrf2_super"/>
    <property type="match status" value="1"/>
</dbReference>
<dbReference type="PANTHER" id="PTHR33221:SF4">
    <property type="entry name" value="HTH-TYPE TRANSCRIPTIONAL REPRESSOR NSRR"/>
    <property type="match status" value="1"/>
</dbReference>
<dbReference type="PANTHER" id="PTHR33221">
    <property type="entry name" value="WINGED HELIX-TURN-HELIX TRANSCRIPTIONAL REGULATOR, RRF2 FAMILY"/>
    <property type="match status" value="1"/>
</dbReference>
<dbReference type="Pfam" id="PF02082">
    <property type="entry name" value="Rrf2"/>
    <property type="match status" value="1"/>
</dbReference>
<dbReference type="SUPFAM" id="SSF46785">
    <property type="entry name" value="Winged helix' DNA-binding domain"/>
    <property type="match status" value="1"/>
</dbReference>
<dbReference type="PROSITE" id="PS01332">
    <property type="entry name" value="HTH_RRF2_1"/>
    <property type="match status" value="1"/>
</dbReference>
<dbReference type="PROSITE" id="PS51197">
    <property type="entry name" value="HTH_RRF2_2"/>
    <property type="match status" value="1"/>
</dbReference>
<accession>Q0T9L5</accession>